<feature type="chain" id="PRO_1000004373" description="UDP-N-acetylmuramate--L-alanine ligase">
    <location>
        <begin position="1"/>
        <end position="484"/>
    </location>
</feature>
<feature type="binding site" evidence="1">
    <location>
        <begin position="122"/>
        <end position="128"/>
    </location>
    <ligand>
        <name>ATP</name>
        <dbReference type="ChEBI" id="CHEBI:30616"/>
    </ligand>
</feature>
<name>MURC_MYCSJ</name>
<sequence length="484" mass="49637">MSTPPLPDELRRVHMVGIGGAGMSGIARILLDRGAMVSGSDAKESRAVVALRARGAAIRIGHDASSLDLLPGGPTAVVTTHAAIPKTNPELVEARRRAIPIVLRPVVLAKLMAGHTTLMVTGTHGKTTTTSMLIVALQHCGFDPSFAVGGDLGEAGTNAHHGSGECFVAEADESDGSLLEYTPDVAVVTNIEADHLDFFGSAEAYTAVFDAFVERLTPGGALIACVDDPGSAALAERTAALGVRVLRYGSAGGRDLAGALVGWEQQGTGAVAHIQLAGESAPRAMRLSVPGRHMALNALGALLAALQVGADPDTVLDGLAGFEGVRRRFELVGTATGVRVFDDYAHHPTEVAATLAALRAVTDQAGDGRAVVVFQPHLYSRTETFAREFGAALSAADLVFVLDVYGAREQPIAGVSGASIVEHVGVPVTYVPDFSAVAAQVAGAVRPGDVVVTMGAGDVTMLGPEIIAALQARANRTVPGAGAR</sequence>
<accession>A3Q1L7</accession>
<keyword id="KW-0067">ATP-binding</keyword>
<keyword id="KW-0131">Cell cycle</keyword>
<keyword id="KW-0132">Cell division</keyword>
<keyword id="KW-0133">Cell shape</keyword>
<keyword id="KW-0961">Cell wall biogenesis/degradation</keyword>
<keyword id="KW-0963">Cytoplasm</keyword>
<keyword id="KW-0436">Ligase</keyword>
<keyword id="KW-0547">Nucleotide-binding</keyword>
<keyword id="KW-0573">Peptidoglycan synthesis</keyword>
<proteinExistence type="inferred from homology"/>
<evidence type="ECO:0000255" key="1">
    <source>
        <dbReference type="HAMAP-Rule" id="MF_00046"/>
    </source>
</evidence>
<gene>
    <name evidence="1" type="primary">murC</name>
    <name type="ordered locus">Mjls_3266</name>
</gene>
<reference key="1">
    <citation type="submission" date="2007-02" db="EMBL/GenBank/DDBJ databases">
        <title>Complete sequence of Mycobacterium sp. JLS.</title>
        <authorList>
            <consortium name="US DOE Joint Genome Institute"/>
            <person name="Copeland A."/>
            <person name="Lucas S."/>
            <person name="Lapidus A."/>
            <person name="Barry K."/>
            <person name="Detter J.C."/>
            <person name="Glavina del Rio T."/>
            <person name="Hammon N."/>
            <person name="Israni S."/>
            <person name="Dalin E."/>
            <person name="Tice H."/>
            <person name="Pitluck S."/>
            <person name="Chain P."/>
            <person name="Malfatti S."/>
            <person name="Shin M."/>
            <person name="Vergez L."/>
            <person name="Schmutz J."/>
            <person name="Larimer F."/>
            <person name="Land M."/>
            <person name="Hauser L."/>
            <person name="Kyrpides N."/>
            <person name="Mikhailova N."/>
            <person name="Miller C.D."/>
            <person name="Anderson A.J."/>
            <person name="Sims R.C."/>
            <person name="Richardson P."/>
        </authorList>
    </citation>
    <scope>NUCLEOTIDE SEQUENCE [LARGE SCALE GENOMIC DNA]</scope>
    <source>
        <strain>JLS</strain>
    </source>
</reference>
<organism>
    <name type="scientific">Mycobacterium sp. (strain JLS)</name>
    <dbReference type="NCBI Taxonomy" id="164757"/>
    <lineage>
        <taxon>Bacteria</taxon>
        <taxon>Bacillati</taxon>
        <taxon>Actinomycetota</taxon>
        <taxon>Actinomycetes</taxon>
        <taxon>Mycobacteriales</taxon>
        <taxon>Mycobacteriaceae</taxon>
        <taxon>Mycobacterium</taxon>
    </lineage>
</organism>
<protein>
    <recommendedName>
        <fullName evidence="1">UDP-N-acetylmuramate--L-alanine ligase</fullName>
        <ecNumber evidence="1">6.3.2.8</ecNumber>
    </recommendedName>
    <alternativeName>
        <fullName evidence="1">UDP-N-acetylmuramoyl-L-alanine synthetase</fullName>
    </alternativeName>
</protein>
<dbReference type="EC" id="6.3.2.8" evidence="1"/>
<dbReference type="EMBL" id="CP000580">
    <property type="protein sequence ID" value="ABN99044.1"/>
    <property type="molecule type" value="Genomic_DNA"/>
</dbReference>
<dbReference type="SMR" id="A3Q1L7"/>
<dbReference type="KEGG" id="mjl:Mjls_3266"/>
<dbReference type="HOGENOM" id="CLU_028104_2_1_11"/>
<dbReference type="BioCyc" id="MSP164757:G1G8C-3292-MONOMER"/>
<dbReference type="UniPathway" id="UPA00219"/>
<dbReference type="GO" id="GO:0005737">
    <property type="term" value="C:cytoplasm"/>
    <property type="evidence" value="ECO:0007669"/>
    <property type="project" value="UniProtKB-SubCell"/>
</dbReference>
<dbReference type="GO" id="GO:0005524">
    <property type="term" value="F:ATP binding"/>
    <property type="evidence" value="ECO:0007669"/>
    <property type="project" value="UniProtKB-UniRule"/>
</dbReference>
<dbReference type="GO" id="GO:0008763">
    <property type="term" value="F:UDP-N-acetylmuramate-L-alanine ligase activity"/>
    <property type="evidence" value="ECO:0007669"/>
    <property type="project" value="UniProtKB-UniRule"/>
</dbReference>
<dbReference type="GO" id="GO:0051301">
    <property type="term" value="P:cell division"/>
    <property type="evidence" value="ECO:0007669"/>
    <property type="project" value="UniProtKB-KW"/>
</dbReference>
<dbReference type="GO" id="GO:0071555">
    <property type="term" value="P:cell wall organization"/>
    <property type="evidence" value="ECO:0007669"/>
    <property type="project" value="UniProtKB-KW"/>
</dbReference>
<dbReference type="GO" id="GO:0009252">
    <property type="term" value="P:peptidoglycan biosynthetic process"/>
    <property type="evidence" value="ECO:0007669"/>
    <property type="project" value="UniProtKB-UniRule"/>
</dbReference>
<dbReference type="GO" id="GO:0008360">
    <property type="term" value="P:regulation of cell shape"/>
    <property type="evidence" value="ECO:0007669"/>
    <property type="project" value="UniProtKB-KW"/>
</dbReference>
<dbReference type="FunFam" id="3.40.50.720:FF:000046">
    <property type="entry name" value="UDP-N-acetylmuramate--L-alanine ligase"/>
    <property type="match status" value="1"/>
</dbReference>
<dbReference type="Gene3D" id="3.90.190.20">
    <property type="entry name" value="Mur ligase, C-terminal domain"/>
    <property type="match status" value="1"/>
</dbReference>
<dbReference type="Gene3D" id="3.40.1190.10">
    <property type="entry name" value="Mur-like, catalytic domain"/>
    <property type="match status" value="1"/>
</dbReference>
<dbReference type="Gene3D" id="3.40.50.720">
    <property type="entry name" value="NAD(P)-binding Rossmann-like Domain"/>
    <property type="match status" value="1"/>
</dbReference>
<dbReference type="HAMAP" id="MF_00046">
    <property type="entry name" value="MurC"/>
    <property type="match status" value="1"/>
</dbReference>
<dbReference type="InterPro" id="IPR036565">
    <property type="entry name" value="Mur-like_cat_sf"/>
</dbReference>
<dbReference type="InterPro" id="IPR004101">
    <property type="entry name" value="Mur_ligase_C"/>
</dbReference>
<dbReference type="InterPro" id="IPR036615">
    <property type="entry name" value="Mur_ligase_C_dom_sf"/>
</dbReference>
<dbReference type="InterPro" id="IPR013221">
    <property type="entry name" value="Mur_ligase_cen"/>
</dbReference>
<dbReference type="InterPro" id="IPR000713">
    <property type="entry name" value="Mur_ligase_N"/>
</dbReference>
<dbReference type="InterPro" id="IPR050061">
    <property type="entry name" value="MurCDEF_pg_biosynth"/>
</dbReference>
<dbReference type="InterPro" id="IPR005758">
    <property type="entry name" value="UDP-N-AcMur_Ala_ligase_MurC"/>
</dbReference>
<dbReference type="NCBIfam" id="TIGR01082">
    <property type="entry name" value="murC"/>
    <property type="match status" value="1"/>
</dbReference>
<dbReference type="PANTHER" id="PTHR43445:SF3">
    <property type="entry name" value="UDP-N-ACETYLMURAMATE--L-ALANINE LIGASE"/>
    <property type="match status" value="1"/>
</dbReference>
<dbReference type="PANTHER" id="PTHR43445">
    <property type="entry name" value="UDP-N-ACETYLMURAMATE--L-ALANINE LIGASE-RELATED"/>
    <property type="match status" value="1"/>
</dbReference>
<dbReference type="Pfam" id="PF01225">
    <property type="entry name" value="Mur_ligase"/>
    <property type="match status" value="1"/>
</dbReference>
<dbReference type="Pfam" id="PF02875">
    <property type="entry name" value="Mur_ligase_C"/>
    <property type="match status" value="1"/>
</dbReference>
<dbReference type="Pfam" id="PF08245">
    <property type="entry name" value="Mur_ligase_M"/>
    <property type="match status" value="1"/>
</dbReference>
<dbReference type="SUPFAM" id="SSF51984">
    <property type="entry name" value="MurCD N-terminal domain"/>
    <property type="match status" value="1"/>
</dbReference>
<dbReference type="SUPFAM" id="SSF53623">
    <property type="entry name" value="MurD-like peptide ligases, catalytic domain"/>
    <property type="match status" value="1"/>
</dbReference>
<dbReference type="SUPFAM" id="SSF53244">
    <property type="entry name" value="MurD-like peptide ligases, peptide-binding domain"/>
    <property type="match status" value="1"/>
</dbReference>
<comment type="function">
    <text evidence="1">Cell wall formation.</text>
</comment>
<comment type="catalytic activity">
    <reaction evidence="1">
        <text>UDP-N-acetyl-alpha-D-muramate + L-alanine + ATP = UDP-N-acetyl-alpha-D-muramoyl-L-alanine + ADP + phosphate + H(+)</text>
        <dbReference type="Rhea" id="RHEA:23372"/>
        <dbReference type="ChEBI" id="CHEBI:15378"/>
        <dbReference type="ChEBI" id="CHEBI:30616"/>
        <dbReference type="ChEBI" id="CHEBI:43474"/>
        <dbReference type="ChEBI" id="CHEBI:57972"/>
        <dbReference type="ChEBI" id="CHEBI:70757"/>
        <dbReference type="ChEBI" id="CHEBI:83898"/>
        <dbReference type="ChEBI" id="CHEBI:456216"/>
        <dbReference type="EC" id="6.3.2.8"/>
    </reaction>
</comment>
<comment type="pathway">
    <text evidence="1">Cell wall biogenesis; peptidoglycan biosynthesis.</text>
</comment>
<comment type="subcellular location">
    <subcellularLocation>
        <location evidence="1">Cytoplasm</location>
    </subcellularLocation>
</comment>
<comment type="similarity">
    <text evidence="1">Belongs to the MurCDEF family.</text>
</comment>